<keyword id="KW-0407">Ion channel</keyword>
<keyword id="KW-0406">Ion transport</keyword>
<keyword id="KW-0472">Membrane</keyword>
<keyword id="KW-0630">Potassium</keyword>
<keyword id="KW-0633">Potassium transport</keyword>
<keyword id="KW-1185">Reference proteome</keyword>
<keyword id="KW-0702">S-nitrosylation</keyword>
<keyword id="KW-0812">Transmembrane</keyword>
<keyword id="KW-1133">Transmembrane helix</keyword>
<keyword id="KW-0813">Transport</keyword>
<keyword id="KW-0851">Voltage-gated channel</keyword>
<proteinExistence type="evidence at transcript level"/>
<reference key="1">
    <citation type="journal article" date="1998" name="J. Neurosci.">
        <title>Kir2.4: a novel K+ inward rectifier channel associated with motoneurons of cranial nerve nuclei.</title>
        <authorList>
            <person name="Toepert C."/>
            <person name="Doering F."/>
            <person name="Wischmeyer E."/>
            <person name="Karschin C."/>
            <person name="Brockhaus J."/>
            <person name="Ballanyi K."/>
            <person name="Derst C."/>
            <person name="Karschin A."/>
        </authorList>
    </citation>
    <scope>NUCLEOTIDE SEQUENCE [MRNA]</scope>
    <scope>FUNCTION</scope>
    <scope>TRANSPORTER ACTIVITY</scope>
    <scope>ACTIVITY REGULATION</scope>
    <scope>TISSUE SPECIFICITY</scope>
    <source>
        <strain>Sprague-Dawley</strain>
        <tissue>Brain</tissue>
    </source>
</reference>
<protein>
    <recommendedName>
        <fullName>ATP-sensitive inward rectifier potassium channel 14</fullName>
    </recommendedName>
    <alternativeName>
        <fullName evidence="7">Inward rectifier K(+) channel Kir2.4</fullName>
        <shortName>IRK-4</shortName>
    </alternativeName>
    <alternativeName>
        <fullName>Potassium channel, inwardly rectifying subfamily J member 14</fullName>
    </alternativeName>
</protein>
<name>KCJ14_RAT</name>
<sequence length="434" mass="47609">MGLARALRRLSGALEPGNSRAGDEEEAGAGLCRNGWAPGPVAGNRRRGRFVKKDGHCNVRFVNLGGQGARYLSDLFTTCVDVRWRWMCLLFSCSFLASWLLFGLTFWLIASLHGDLAAPPPPAPCFSQVASFLAAFLFALETQTSIGYGVRSVTEECPAAVAAVVLQCIAGCVLDAFVVGAVMAKMAKPKKRNETLVFSENAVVALRDRRLCLMWRVGNLRRSHLVEAHVRAQLLQPRVTPEGEYIPLDHQDVDVGFDGGTDRIFLVSPITIVHEIDSASPLYELGRAELARADFELVVILEGMVEATAMTTQCRSSYLPGELLWGHRFEPVLFQRGSQYEVDYRHFHRTYEVPGTPVCSAKELDERAEQASHSPKSSFPGSLAAFCYENELALSCCQEEDEEEDTKEGTSAETPDRAASPQALTPTLALTLPP</sequence>
<gene>
    <name type="primary">Kcnj14</name>
    <name type="synonym">Irk4</name>
</gene>
<organism>
    <name type="scientific">Rattus norvegicus</name>
    <name type="common">Rat</name>
    <dbReference type="NCBI Taxonomy" id="10116"/>
    <lineage>
        <taxon>Eukaryota</taxon>
        <taxon>Metazoa</taxon>
        <taxon>Chordata</taxon>
        <taxon>Craniata</taxon>
        <taxon>Vertebrata</taxon>
        <taxon>Euteleostomi</taxon>
        <taxon>Mammalia</taxon>
        <taxon>Eutheria</taxon>
        <taxon>Euarchontoglires</taxon>
        <taxon>Glires</taxon>
        <taxon>Rodentia</taxon>
        <taxon>Myomorpha</taxon>
        <taxon>Muroidea</taxon>
        <taxon>Muridae</taxon>
        <taxon>Murinae</taxon>
        <taxon>Rattus</taxon>
    </lineage>
</organism>
<dbReference type="EMBL" id="AJ003065">
    <property type="protein sequence ID" value="CAA05839.1"/>
    <property type="molecule type" value="mRNA"/>
</dbReference>
<dbReference type="RefSeq" id="NP_733836.1">
    <property type="nucleotide sequence ID" value="NM_170718.2"/>
</dbReference>
<dbReference type="SMR" id="O70596"/>
<dbReference type="FunCoup" id="O70596">
    <property type="interactions" value="133"/>
</dbReference>
<dbReference type="STRING" id="10116.ENSRNOP00000028591"/>
<dbReference type="GuidetoPHARMACOLOGY" id="433"/>
<dbReference type="TCDB" id="1.A.2.1.5">
    <property type="family name" value="the inward rectifier k(+) channel (irk-c) family"/>
</dbReference>
<dbReference type="PaxDb" id="10116-ENSRNOP00000028591"/>
<dbReference type="ABCD" id="O70596">
    <property type="antibodies" value="1 sequenced antibody"/>
</dbReference>
<dbReference type="Ensembl" id="ENSRNOT00000028591.7">
    <property type="protein sequence ID" value="ENSRNOP00000028591.6"/>
    <property type="gene ID" value="ENSRNOG00000021056.7"/>
</dbReference>
<dbReference type="GeneID" id="276720"/>
<dbReference type="KEGG" id="rno:276720"/>
<dbReference type="AGR" id="RGD:628872"/>
<dbReference type="CTD" id="3770"/>
<dbReference type="RGD" id="628872">
    <property type="gene designation" value="Kcnj14"/>
</dbReference>
<dbReference type="eggNOG" id="KOG3827">
    <property type="taxonomic scope" value="Eukaryota"/>
</dbReference>
<dbReference type="GeneTree" id="ENSGT01030000234586"/>
<dbReference type="HOGENOM" id="CLU_022738_3_0_1"/>
<dbReference type="InParanoid" id="O70596"/>
<dbReference type="OMA" id="CHNGWAP"/>
<dbReference type="OrthoDB" id="273257at2759"/>
<dbReference type="PhylomeDB" id="O70596"/>
<dbReference type="Reactome" id="R-RNO-1296053">
    <property type="pathway name" value="Classical Kir channels"/>
</dbReference>
<dbReference type="Reactome" id="R-RNO-5576886">
    <property type="pathway name" value="Phase 4 - resting membrane potential"/>
</dbReference>
<dbReference type="PRO" id="PR:O70596"/>
<dbReference type="Proteomes" id="UP000002494">
    <property type="component" value="Chromosome 1"/>
</dbReference>
<dbReference type="Bgee" id="ENSRNOG00000021056">
    <property type="expression patterns" value="Expressed in cerebellum and 19 other cell types or tissues"/>
</dbReference>
<dbReference type="GO" id="GO:0030425">
    <property type="term" value="C:dendrite"/>
    <property type="evidence" value="ECO:0000314"/>
    <property type="project" value="RGD"/>
</dbReference>
<dbReference type="GO" id="GO:0034702">
    <property type="term" value="C:monoatomic ion channel complex"/>
    <property type="evidence" value="ECO:0007669"/>
    <property type="project" value="UniProtKB-KW"/>
</dbReference>
<dbReference type="GO" id="GO:0043025">
    <property type="term" value="C:neuronal cell body"/>
    <property type="evidence" value="ECO:0000314"/>
    <property type="project" value="RGD"/>
</dbReference>
<dbReference type="GO" id="GO:0005886">
    <property type="term" value="C:plasma membrane"/>
    <property type="evidence" value="ECO:0000318"/>
    <property type="project" value="GO_Central"/>
</dbReference>
<dbReference type="GO" id="GO:0005242">
    <property type="term" value="F:inward rectifier potassium channel activity"/>
    <property type="evidence" value="ECO:0000314"/>
    <property type="project" value="RGD"/>
</dbReference>
<dbReference type="GO" id="GO:1990573">
    <property type="term" value="P:potassium ion import across plasma membrane"/>
    <property type="evidence" value="ECO:0000318"/>
    <property type="project" value="GO_Central"/>
</dbReference>
<dbReference type="GO" id="GO:0034765">
    <property type="term" value="P:regulation of monoatomic ion transmembrane transport"/>
    <property type="evidence" value="ECO:0000318"/>
    <property type="project" value="GO_Central"/>
</dbReference>
<dbReference type="FunFam" id="1.10.287.70:FF:000063">
    <property type="entry name" value="ATP-sensitive inward rectifier potassium channel 14"/>
    <property type="match status" value="1"/>
</dbReference>
<dbReference type="FunFam" id="2.60.40.1400:FF:000001">
    <property type="entry name" value="G protein-activated inward rectifier potassium channel 2"/>
    <property type="match status" value="1"/>
</dbReference>
<dbReference type="Gene3D" id="1.10.287.70">
    <property type="match status" value="1"/>
</dbReference>
<dbReference type="Gene3D" id="2.60.40.1400">
    <property type="entry name" value="G protein-activated inward rectifier potassium channel 1"/>
    <property type="match status" value="1"/>
</dbReference>
<dbReference type="InterPro" id="IPR014756">
    <property type="entry name" value="Ig_E-set"/>
</dbReference>
<dbReference type="InterPro" id="IPR041647">
    <property type="entry name" value="IRK_C"/>
</dbReference>
<dbReference type="InterPro" id="IPR016449">
    <property type="entry name" value="K_chnl_inward-rec_Kir"/>
</dbReference>
<dbReference type="InterPro" id="IPR013518">
    <property type="entry name" value="K_chnl_inward-rec_Kir_cyto"/>
</dbReference>
<dbReference type="InterPro" id="IPR040445">
    <property type="entry name" value="Kir_TM"/>
</dbReference>
<dbReference type="PANTHER" id="PTHR11767:SF40">
    <property type="entry name" value="ATP-SENSITIVE INWARD RECTIFIER POTASSIUM CHANNEL 14"/>
    <property type="match status" value="1"/>
</dbReference>
<dbReference type="PANTHER" id="PTHR11767">
    <property type="entry name" value="INWARD RECTIFIER POTASSIUM CHANNEL"/>
    <property type="match status" value="1"/>
</dbReference>
<dbReference type="Pfam" id="PF01007">
    <property type="entry name" value="IRK"/>
    <property type="match status" value="1"/>
</dbReference>
<dbReference type="Pfam" id="PF17655">
    <property type="entry name" value="IRK_C"/>
    <property type="match status" value="1"/>
</dbReference>
<dbReference type="PIRSF" id="PIRSF005465">
    <property type="entry name" value="GIRK_kir"/>
    <property type="match status" value="1"/>
</dbReference>
<dbReference type="PRINTS" id="PR01320">
    <property type="entry name" value="KIRCHANNEL"/>
</dbReference>
<dbReference type="SUPFAM" id="SSF81296">
    <property type="entry name" value="E set domains"/>
    <property type="match status" value="1"/>
</dbReference>
<dbReference type="SUPFAM" id="SSF81324">
    <property type="entry name" value="Voltage-gated potassium channels"/>
    <property type="match status" value="1"/>
</dbReference>
<feature type="chain" id="PRO_0000154970" description="ATP-sensitive inward rectifier potassium channel 14">
    <location>
        <begin position="1"/>
        <end position="434"/>
    </location>
</feature>
<feature type="topological domain" description="Cytoplasmic" evidence="1">
    <location>
        <begin position="1"/>
        <end position="81"/>
    </location>
</feature>
<feature type="transmembrane region" description="Helical; Name=M1" evidence="1">
    <location>
        <begin position="82"/>
        <end position="108"/>
    </location>
</feature>
<feature type="topological domain" description="Extracellular" evidence="1">
    <location>
        <begin position="109"/>
        <end position="131"/>
    </location>
</feature>
<feature type="intramembrane region" description="Helical; Pore-forming; Name=H5" evidence="1">
    <location>
        <begin position="132"/>
        <end position="148"/>
    </location>
</feature>
<feature type="topological domain" description="Extracellular" evidence="1">
    <location>
        <begin position="149"/>
        <end position="157"/>
    </location>
</feature>
<feature type="transmembrane region" description="Helical; Name=M2" evidence="1">
    <location>
        <begin position="158"/>
        <end position="185"/>
    </location>
</feature>
<feature type="topological domain" description="Cytoplasmic" evidence="1">
    <location>
        <begin position="186"/>
        <end position="434"/>
    </location>
</feature>
<feature type="region of interest" description="Disordered" evidence="5">
    <location>
        <begin position="398"/>
        <end position="434"/>
    </location>
</feature>
<feature type="short sequence motif" description="Selectivity filter" evidence="1">
    <location>
        <begin position="145"/>
        <end position="150"/>
    </location>
</feature>
<feature type="compositionally biased region" description="Basic and acidic residues" evidence="5">
    <location>
        <begin position="407"/>
        <end position="416"/>
    </location>
</feature>
<feature type="compositionally biased region" description="Low complexity" evidence="5">
    <location>
        <begin position="418"/>
        <end position="434"/>
    </location>
</feature>
<feature type="modified residue" description="S-nitrosocysteine" evidence="2">
    <location>
        <position position="79"/>
    </location>
</feature>
<evidence type="ECO:0000250" key="1">
    <source>
        <dbReference type="UniProtKB" id="F1NHE9"/>
    </source>
</evidence>
<evidence type="ECO:0000250" key="2">
    <source>
        <dbReference type="UniProtKB" id="P63252"/>
    </source>
</evidence>
<evidence type="ECO:0000250" key="3">
    <source>
        <dbReference type="UniProtKB" id="Q9UNX9"/>
    </source>
</evidence>
<evidence type="ECO:0000255" key="4"/>
<evidence type="ECO:0000256" key="5">
    <source>
        <dbReference type="SAM" id="MobiDB-lite"/>
    </source>
</evidence>
<evidence type="ECO:0000269" key="6">
    <source>
    </source>
</evidence>
<evidence type="ECO:0000303" key="7">
    <source>
    </source>
</evidence>
<evidence type="ECO:0000305" key="8"/>
<accession>O70596</accession>
<comment type="function">
    <text evidence="6">Inward rectifier potassium channels are characterized by a greater tendency to allow potassium to flow into the cell rather than out of it. Their voltage dependence is regulated by the concentration of extracellular potassium; as external potassium is raised, the voltage range of the channel opening shifts to more positive voltages.</text>
</comment>
<comment type="catalytic activity">
    <reaction evidence="6">
        <text>K(+)(in) = K(+)(out)</text>
        <dbReference type="Rhea" id="RHEA:29463"/>
        <dbReference type="ChEBI" id="CHEBI:29103"/>
    </reaction>
</comment>
<comment type="activity regulation">
    <text evidence="3 6">Channel activity is regulated by variations of cytosolic pH; channels are activated by alkaline and inhibited by acidic pH values (By similarity). Inhibited by Ba(2+) and Cs(+) in a voltage-dependent manner; sensitivity to those inhibitors is lower than in other Kir channels (PubMed:9592090).</text>
</comment>
<comment type="subcellular location">
    <subcellularLocation>
        <location evidence="4">Membrane</location>
        <topology evidence="4">Multi-pass membrane protein</topology>
    </subcellularLocation>
</comment>
<comment type="tissue specificity">
    <text evidence="6">Expressed predominantly in motoneurons of cranial nerve motor nuclei within the general somatic and special visceral motor cell column.</text>
</comment>
<comment type="similarity">
    <text evidence="8">Belongs to the inward rectifier-type potassium channel (TC 1.A.2.1) family. KCNJ14 subfamily.</text>
</comment>